<evidence type="ECO:0000255" key="1">
    <source>
        <dbReference type="HAMAP-Rule" id="MF_01876"/>
    </source>
</evidence>
<evidence type="ECO:0000256" key="2">
    <source>
        <dbReference type="SAM" id="MobiDB-lite"/>
    </source>
</evidence>
<proteinExistence type="inferred from homology"/>
<comment type="function">
    <text evidence="1">Catalyzes the reversible cleavage of pseudouridine 5'-phosphate (PsiMP) to ribose 5-phosphate and uracil. Functions biologically in the cleavage direction, as part of a pseudouridine degradation pathway.</text>
</comment>
<comment type="catalytic activity">
    <reaction evidence="1">
        <text>D-ribose 5-phosphate + uracil = psi-UMP + H2O</text>
        <dbReference type="Rhea" id="RHEA:18337"/>
        <dbReference type="ChEBI" id="CHEBI:15377"/>
        <dbReference type="ChEBI" id="CHEBI:17568"/>
        <dbReference type="ChEBI" id="CHEBI:58380"/>
        <dbReference type="ChEBI" id="CHEBI:78346"/>
        <dbReference type="EC" id="4.2.1.70"/>
    </reaction>
</comment>
<comment type="cofactor">
    <cofactor evidence="1">
        <name>Mn(2+)</name>
        <dbReference type="ChEBI" id="CHEBI:29035"/>
    </cofactor>
    <text evidence="1">Binds 1 Mn(2+) ion per subunit.</text>
</comment>
<comment type="subunit">
    <text evidence="1">Homotrimer.</text>
</comment>
<comment type="similarity">
    <text evidence="1">Belongs to the pseudouridine-5'-phosphate glycosidase family.</text>
</comment>
<organism>
    <name type="scientific">Methylobacterium nodulans (strain LMG 21967 / CNCM I-2342 / ORS 2060)</name>
    <dbReference type="NCBI Taxonomy" id="460265"/>
    <lineage>
        <taxon>Bacteria</taxon>
        <taxon>Pseudomonadati</taxon>
        <taxon>Pseudomonadota</taxon>
        <taxon>Alphaproteobacteria</taxon>
        <taxon>Hyphomicrobiales</taxon>
        <taxon>Methylobacteriaceae</taxon>
        <taxon>Methylobacterium</taxon>
    </lineage>
</organism>
<reference key="1">
    <citation type="submission" date="2009-01" db="EMBL/GenBank/DDBJ databases">
        <title>Complete sequence of chromosome of Methylobacterium nodulans ORS 2060.</title>
        <authorList>
            <consortium name="US DOE Joint Genome Institute"/>
            <person name="Lucas S."/>
            <person name="Copeland A."/>
            <person name="Lapidus A."/>
            <person name="Glavina del Rio T."/>
            <person name="Dalin E."/>
            <person name="Tice H."/>
            <person name="Bruce D."/>
            <person name="Goodwin L."/>
            <person name="Pitluck S."/>
            <person name="Sims D."/>
            <person name="Brettin T."/>
            <person name="Detter J.C."/>
            <person name="Han C."/>
            <person name="Larimer F."/>
            <person name="Land M."/>
            <person name="Hauser L."/>
            <person name="Kyrpides N."/>
            <person name="Ivanova N."/>
            <person name="Marx C.J."/>
            <person name="Richardson P."/>
        </authorList>
    </citation>
    <scope>NUCLEOTIDE SEQUENCE [LARGE SCALE GENOMIC DNA]</scope>
    <source>
        <strain>LMG 21967 / CNCM I-2342 / ORS 2060</strain>
    </source>
</reference>
<name>PSUG_METNO</name>
<feature type="chain" id="PRO_0000390529" description="Pseudouridine-5'-phosphate glycosidase">
    <location>
        <begin position="1"/>
        <end position="337"/>
    </location>
</feature>
<feature type="region of interest" description="Disordered" evidence="2">
    <location>
        <begin position="306"/>
        <end position="337"/>
    </location>
</feature>
<feature type="compositionally biased region" description="Low complexity" evidence="2">
    <location>
        <begin position="306"/>
        <end position="325"/>
    </location>
</feature>
<feature type="active site" description="Proton donor" evidence="1">
    <location>
        <position position="26"/>
    </location>
</feature>
<feature type="active site" description="Nucleophile" evidence="1">
    <location>
        <position position="160"/>
    </location>
</feature>
<feature type="binding site" evidence="1">
    <location>
        <position position="87"/>
    </location>
    <ligand>
        <name>substrate</name>
    </ligand>
</feature>
<feature type="binding site" evidence="1">
    <location>
        <position position="107"/>
    </location>
    <ligand>
        <name>substrate</name>
    </ligand>
</feature>
<feature type="binding site" evidence="1">
    <location>
        <position position="139"/>
    </location>
    <ligand>
        <name>Mn(2+)</name>
        <dbReference type="ChEBI" id="CHEBI:29035"/>
    </ligand>
</feature>
<feature type="binding site" evidence="1">
    <location>
        <begin position="141"/>
        <end position="143"/>
    </location>
    <ligand>
        <name>substrate</name>
    </ligand>
</feature>
<dbReference type="EC" id="4.2.1.70" evidence="1"/>
<dbReference type="EMBL" id="CP001349">
    <property type="protein sequence ID" value="ACL56052.1"/>
    <property type="molecule type" value="Genomic_DNA"/>
</dbReference>
<dbReference type="RefSeq" id="WP_015927750.1">
    <property type="nucleotide sequence ID" value="NC_011894.1"/>
</dbReference>
<dbReference type="SMR" id="B8II14"/>
<dbReference type="STRING" id="460265.Mnod_1045"/>
<dbReference type="KEGG" id="mno:Mnod_1045"/>
<dbReference type="eggNOG" id="COG2313">
    <property type="taxonomic scope" value="Bacteria"/>
</dbReference>
<dbReference type="HOGENOM" id="CLU_012201_0_1_5"/>
<dbReference type="OrthoDB" id="9805870at2"/>
<dbReference type="Proteomes" id="UP000008207">
    <property type="component" value="Chromosome"/>
</dbReference>
<dbReference type="GO" id="GO:0005737">
    <property type="term" value="C:cytoplasm"/>
    <property type="evidence" value="ECO:0007669"/>
    <property type="project" value="TreeGrafter"/>
</dbReference>
<dbReference type="GO" id="GO:0016798">
    <property type="term" value="F:hydrolase activity, acting on glycosyl bonds"/>
    <property type="evidence" value="ECO:0007669"/>
    <property type="project" value="UniProtKB-KW"/>
</dbReference>
<dbReference type="GO" id="GO:0046872">
    <property type="term" value="F:metal ion binding"/>
    <property type="evidence" value="ECO:0007669"/>
    <property type="project" value="UniProtKB-KW"/>
</dbReference>
<dbReference type="GO" id="GO:0004730">
    <property type="term" value="F:pseudouridylate synthase activity"/>
    <property type="evidence" value="ECO:0007669"/>
    <property type="project" value="UniProtKB-UniRule"/>
</dbReference>
<dbReference type="GO" id="GO:0046113">
    <property type="term" value="P:nucleobase catabolic process"/>
    <property type="evidence" value="ECO:0007669"/>
    <property type="project" value="UniProtKB-UniRule"/>
</dbReference>
<dbReference type="Gene3D" id="3.40.1790.10">
    <property type="entry name" value="Indigoidine synthase domain"/>
    <property type="match status" value="1"/>
</dbReference>
<dbReference type="HAMAP" id="MF_01876">
    <property type="entry name" value="PsiMP_glycosidase"/>
    <property type="match status" value="1"/>
</dbReference>
<dbReference type="InterPro" id="IPR022830">
    <property type="entry name" value="Indigdn_synthA-like"/>
</dbReference>
<dbReference type="InterPro" id="IPR007342">
    <property type="entry name" value="PsuG"/>
</dbReference>
<dbReference type="PANTHER" id="PTHR42909:SF1">
    <property type="entry name" value="CARBOHYDRATE KINASE PFKB DOMAIN-CONTAINING PROTEIN"/>
    <property type="match status" value="1"/>
</dbReference>
<dbReference type="PANTHER" id="PTHR42909">
    <property type="entry name" value="ZGC:136858"/>
    <property type="match status" value="1"/>
</dbReference>
<dbReference type="Pfam" id="PF04227">
    <property type="entry name" value="Indigoidine_A"/>
    <property type="match status" value="1"/>
</dbReference>
<dbReference type="SUPFAM" id="SSF110581">
    <property type="entry name" value="Indigoidine synthase A-like"/>
    <property type="match status" value="1"/>
</dbReference>
<accession>B8II14</accession>
<gene>
    <name evidence="1" type="primary">psuG</name>
    <name type="ordered locus">Mnod_1045</name>
</gene>
<sequence length="337" mass="34462">MPHPLLDFAPEVRSALDAGAPVVALESTIVTHGMPHPQNVETARAVAAVVRANGAVPAIVAVVAGRIRIGLPEEILDWLGTAKEVLKLSRADLPHAVAAGLHGSTTVAATMICAHRAGIRVFATGGIGGVHRGVEETLDISADLDELARTPVAVVCAGAKAILDLPRTLEYLETRGVPVVGYRTDRFPAFWSRDSGLPAPLRLDTPEAIAALMRTKEALDLGGGILVANPVPEADEIPAREIAALIATAVAQARAAGIAGKAVTPFLLSRLLDLTGGRSLSTNIALVKNNAALAAQLAVALRGARSSGPQAGAGAPGAEPGPARRTSPARAPSGEGW</sequence>
<protein>
    <recommendedName>
        <fullName evidence="1">Pseudouridine-5'-phosphate glycosidase</fullName>
        <shortName evidence="1">PsiMP glycosidase</shortName>
        <ecNumber evidence="1">4.2.1.70</ecNumber>
    </recommendedName>
</protein>
<keyword id="KW-0326">Glycosidase</keyword>
<keyword id="KW-0378">Hydrolase</keyword>
<keyword id="KW-0456">Lyase</keyword>
<keyword id="KW-0464">Manganese</keyword>
<keyword id="KW-0479">Metal-binding</keyword>
<keyword id="KW-1185">Reference proteome</keyword>